<reference key="1">
    <citation type="submission" date="2005-07" db="EMBL/GenBank/DDBJ databases">
        <title>Identification and characterization of differentially expressed gene in porcine placenta.</title>
        <authorList>
            <person name="Hwang K.C."/>
            <person name="Kwon D.N."/>
            <person name="Kang S.J."/>
            <person name="Kim C.U."/>
            <person name="Choi Y.J."/>
            <person name="Lee S.Y."/>
            <person name="Kim J.H."/>
        </authorList>
    </citation>
    <scope>NUCLEOTIDE SEQUENCE [MRNA]</scope>
</reference>
<reference key="2">
    <citation type="journal article" date="2003" name="Nature">
        <title>Comparative analyses of multi-species sequences from targeted genomic regions.</title>
        <authorList>
            <person name="Thomas J.W."/>
            <person name="Touchman J.W."/>
            <person name="Blakesley R.W."/>
            <person name="Bouffard G.G."/>
            <person name="Beckstrom-Sternberg S.M."/>
            <person name="Margulies E.H."/>
            <person name="Blanchette M."/>
            <person name="Siepel A.C."/>
            <person name="Thomas P.J."/>
            <person name="McDowell J.C."/>
            <person name="Maskeri B."/>
            <person name="Hansen N.F."/>
            <person name="Schwartz M.S."/>
            <person name="Weber R.J."/>
            <person name="Kent W.J."/>
            <person name="Karolchik D."/>
            <person name="Bruen T.C."/>
            <person name="Bevan R."/>
            <person name="Cutler D.J."/>
            <person name="Schwartz S."/>
            <person name="Elnitski L."/>
            <person name="Idol J.R."/>
            <person name="Prasad A.B."/>
            <person name="Lee-Lin S.-Q."/>
            <person name="Maduro V.V.B."/>
            <person name="Summers T.J."/>
            <person name="Portnoy M.E."/>
            <person name="Dietrich N.L."/>
            <person name="Akhter N."/>
            <person name="Ayele K."/>
            <person name="Benjamin B."/>
            <person name="Cariaga K."/>
            <person name="Brinkley C.P."/>
            <person name="Brooks S.Y."/>
            <person name="Granite S."/>
            <person name="Guan X."/>
            <person name="Gupta J."/>
            <person name="Haghighi P."/>
            <person name="Ho S.-L."/>
            <person name="Huang M.C."/>
            <person name="Karlins E."/>
            <person name="Laric P.L."/>
            <person name="Legaspi R."/>
            <person name="Lim M.J."/>
            <person name="Maduro Q.L."/>
            <person name="Masiello C.A."/>
            <person name="Mastrian S.D."/>
            <person name="McCloskey J.C."/>
            <person name="Pearson R."/>
            <person name="Stantripop S."/>
            <person name="Tiongson E.E."/>
            <person name="Tran J.T."/>
            <person name="Tsurgeon C."/>
            <person name="Vogt J.L."/>
            <person name="Walker M.A."/>
            <person name="Wetherby K.D."/>
            <person name="Wiggins L.S."/>
            <person name="Young A.C."/>
            <person name="Zhang L.-H."/>
            <person name="Osoegawa K."/>
            <person name="Zhu B."/>
            <person name="Zhao B."/>
            <person name="Shu C.L."/>
            <person name="De Jong P.J."/>
            <person name="Lawrence C.E."/>
            <person name="Smit A.F."/>
            <person name="Chakravarti A."/>
            <person name="Haussler D."/>
            <person name="Green P."/>
            <person name="Miller W."/>
            <person name="Green E.D."/>
        </authorList>
    </citation>
    <scope>NUCLEOTIDE SEQUENCE [LARGE SCALE GENOMIC DNA]</scope>
</reference>
<organism>
    <name type="scientific">Sus scrofa</name>
    <name type="common">Pig</name>
    <dbReference type="NCBI Taxonomy" id="9823"/>
    <lineage>
        <taxon>Eukaryota</taxon>
        <taxon>Metazoa</taxon>
        <taxon>Chordata</taxon>
        <taxon>Craniata</taxon>
        <taxon>Vertebrata</taxon>
        <taxon>Euteleostomi</taxon>
        <taxon>Mammalia</taxon>
        <taxon>Eutheria</taxon>
        <taxon>Laurasiatheria</taxon>
        <taxon>Artiodactyla</taxon>
        <taxon>Suina</taxon>
        <taxon>Suidae</taxon>
        <taxon>Sus</taxon>
    </lineage>
</organism>
<keyword id="KW-0067">ATP-binding</keyword>
<keyword id="KW-1015">Disulfide bond</keyword>
<keyword id="KW-0325">Glycoprotein</keyword>
<keyword id="KW-0418">Kinase</keyword>
<keyword id="KW-0472">Membrane</keyword>
<keyword id="KW-0547">Nucleotide-binding</keyword>
<keyword id="KW-0597">Phosphoprotein</keyword>
<keyword id="KW-0656">Proto-oncogene</keyword>
<keyword id="KW-0675">Receptor</keyword>
<keyword id="KW-1185">Reference proteome</keyword>
<keyword id="KW-0677">Repeat</keyword>
<keyword id="KW-0732">Signal</keyword>
<keyword id="KW-0808">Transferase</keyword>
<keyword id="KW-0812">Transmembrane</keyword>
<keyword id="KW-1133">Transmembrane helix</keyword>
<keyword id="KW-0829">Tyrosine-protein kinase</keyword>
<keyword id="KW-0832">Ubl conjugation</keyword>
<sequence>MKAPAVLAPGILVLLFTLVQKSKGECKEALVKSTMNLNMQYQLPNFTAETPIQNVVLHKHHIYLGALNYIYVLNDIDLRKVAEYKTGPVLEHPDCFPCQDCSHKANLSGGIWRDNINMALLVDTYYDDQLISCGSVHRGTCQRHVLPPDNIADIKSEVHCMYSPQVDEEPSQCPDCVVSALGTKVLLSEKDRFINFFVGNTINSSYLPDHSLHSISVRRLKETQDGFKFLTDQSYIDVLPEFRDSYPIKYVHAFESNHFIYFLTVQRETLDAQTFHTRIIRFCSVDSGLHSYMEMPLECILTEKRRKRSTREEVFNILQAAYVSKPGTQLAKQIGANLNDDILYGVFAQSKPDSAEPMNRSAVCAFPVKYVNEFFNKIVNKNNVRCLQHFYGPNHEHCFNRTLLRNSSGCEVRSDEYRTEFTTALQRIDLFMGQFNQVLLTSISTFIKGDLTIANLGTSEGRFMQVVVSRPGLSTPHVNFHLDSHPVSPEVIVEPLNQNGYTLVVTGKKITKIPLNGLGCEHFQSCSQCLSAPPFVQCGWCQDKCVQLEECPSGTWTQEICLPTVYKVFPTSAPLEGGTTLTICGWDFGFRRNNKFDLRKTKVLLGNESCTLTLSESTTNTLKCTVGPAMNEHFNMSIVISNGRGTTQYRTFSYVDPVITNISPSFGPKTGGTLLTLTGMHLNSGNSRHISIGGKTCTLKSVSDSILECYTPAQTTPTEFPIKLKIDLANREINSFTYREDPIVYEIHPTKSFISGGSTITGVGRNLNSVSVLRMVINVHEAERNFTVACQHRSNSEIICCTTPSLQQLNLQLPLKTKAFFMLDGIHSKYFDLIYVHNPVFKPFEKPVMISIGNENVLEIKGNDIDPEAVKGEVLKVGNKSCENIHSHSEAVLCTVPNDLLKLNSELNIEWKQAISSTVLGKVIVQPDQNFTGLIVGVVSISIILLLLLGLFLWLKKRKQIKDLGSELVRYDARVHTPHLDRLVSARSVSPTTEMVSSEPVDYRATFPEDQFPNSSQNGSCRQVQYPLTDLSPILTSGDSDISSPLLQNTVHIDLSALNPELVQAVQHVVIGPSSLIVHFNEVIGRGHFGCVYHGTLLDNDDKKIHCAVKSLNRITDIGEVSQFLTEGIIMKDFSHPNVLSLLGICLRSEGSPLVVLPYMKHGDLRNFIRNETHNPTVKDLIGFGLQVAKGMKYLASKKFVHRDLAARNCMLDEKFTVKVADFGLARDVYDKEYYSVHNKTGAKLPVKWMALESLQTQKFTTKSDVWSFGVLLWELMTRGAPPYPDVNTFDITVYLLQGRRLLQPEYCPDPLYEVMLKCWHPRAELRPSFSELVSRISAIFSTFIGEHYVHVNATYVNVKCVAPYPSLLSSQDNVDGEGDT</sequence>
<feature type="signal peptide" evidence="4">
    <location>
        <begin position="1"/>
        <end position="24"/>
    </location>
</feature>
<feature type="chain" id="PRO_0000226365" description="Hepatocyte growth factor receptor">
    <location>
        <begin position="25"/>
        <end position="1381"/>
    </location>
</feature>
<feature type="topological domain" description="Extracellular" evidence="4">
    <location>
        <begin position="25"/>
        <end position="932"/>
    </location>
</feature>
<feature type="transmembrane region" description="Helical" evidence="4">
    <location>
        <begin position="933"/>
        <end position="955"/>
    </location>
</feature>
<feature type="topological domain" description="Cytoplasmic" evidence="4">
    <location>
        <begin position="956"/>
        <end position="1381"/>
    </location>
</feature>
<feature type="domain" description="Sema" evidence="6">
    <location>
        <begin position="27"/>
        <end position="515"/>
    </location>
</feature>
<feature type="domain" description="IPT/TIG 1">
    <location>
        <begin position="563"/>
        <end position="655"/>
    </location>
</feature>
<feature type="domain" description="IPT/TIG 2">
    <location>
        <begin position="657"/>
        <end position="739"/>
    </location>
</feature>
<feature type="domain" description="IPT/TIG 3">
    <location>
        <begin position="742"/>
        <end position="836"/>
    </location>
</feature>
<feature type="domain" description="Protein kinase" evidence="5">
    <location>
        <begin position="1078"/>
        <end position="1345"/>
    </location>
</feature>
<feature type="region of interest" description="Interaction with RANBP9" evidence="1">
    <location>
        <begin position="1212"/>
        <end position="1381"/>
    </location>
</feature>
<feature type="region of interest" description="Interaction with MUC20" evidence="1">
    <location>
        <begin position="1320"/>
        <end position="1359"/>
    </location>
</feature>
<feature type="active site" description="Proton acceptor" evidence="5 7">
    <location>
        <position position="1204"/>
    </location>
</feature>
<feature type="binding site" evidence="5">
    <location>
        <begin position="1084"/>
        <end position="1092"/>
    </location>
    <ligand>
        <name>ATP</name>
        <dbReference type="ChEBI" id="CHEBI:30616"/>
    </ligand>
</feature>
<feature type="binding site" evidence="5">
    <location>
        <position position="1110"/>
    </location>
    <ligand>
        <name>ATP</name>
        <dbReference type="ChEBI" id="CHEBI:30616"/>
    </ligand>
</feature>
<feature type="site" description="Cleavage" evidence="4">
    <location>
        <begin position="308"/>
        <end position="309"/>
    </location>
</feature>
<feature type="modified residue" description="Phosphoserine" evidence="2">
    <location>
        <position position="966"/>
    </location>
</feature>
<feature type="modified residue" description="Phosphothreonine" evidence="2">
    <location>
        <position position="977"/>
    </location>
</feature>
<feature type="modified residue" description="Phosphoserine" evidence="2">
    <location>
        <position position="990"/>
    </location>
</feature>
<feature type="modified residue" description="Phosphoserine" evidence="2">
    <location>
        <position position="997"/>
    </location>
</feature>
<feature type="modified residue" description="Phosphotyrosine" evidence="2">
    <location>
        <position position="1003"/>
    </location>
</feature>
<feature type="modified residue" description="Phosphotyrosine" evidence="2">
    <location>
        <position position="1230"/>
    </location>
</feature>
<feature type="modified residue" description="Phosphotyrosine; by autocatalysis" evidence="2">
    <location>
        <position position="1234"/>
    </location>
</feature>
<feature type="modified residue" description="Phosphotyrosine; by autocatalysis" evidence="2">
    <location>
        <position position="1235"/>
    </location>
</feature>
<feature type="modified residue" description="Phosphothreonine" evidence="2">
    <location>
        <position position="1289"/>
    </location>
</feature>
<feature type="modified residue" description="Phosphotyrosine; by autocatalysis" evidence="2">
    <location>
        <position position="1349"/>
    </location>
</feature>
<feature type="modified residue" description="Phosphotyrosine; by autocatalysis" evidence="2">
    <location>
        <position position="1356"/>
    </location>
</feature>
<feature type="modified residue" description="Phosphotyrosine" evidence="2">
    <location>
        <position position="1365"/>
    </location>
</feature>
<feature type="glycosylation site" description="N-linked (GlcNAc...) asparagine" evidence="4">
    <location>
        <position position="45"/>
    </location>
</feature>
<feature type="glycosylation site" description="N-linked (GlcNAc...) asparagine" evidence="4">
    <location>
        <position position="106"/>
    </location>
</feature>
<feature type="glycosylation site" description="N-linked (GlcNAc...) asparagine" evidence="4">
    <location>
        <position position="203"/>
    </location>
</feature>
<feature type="glycosylation site" description="N-linked (GlcNAc...) asparagine" evidence="4">
    <location>
        <position position="359"/>
    </location>
</feature>
<feature type="glycosylation site" description="N-linked (GlcNAc...) asparagine" evidence="4">
    <location>
        <position position="400"/>
    </location>
</feature>
<feature type="glycosylation site" description="N-linked (GlcNAc...) asparagine" evidence="4">
    <location>
        <position position="406"/>
    </location>
</feature>
<feature type="glycosylation site" description="O-linked (Man) threonine" evidence="2">
    <location>
        <position position="582"/>
    </location>
</feature>
<feature type="glycosylation site" description="N-linked (GlcNAc...) asparagine" evidence="4">
    <location>
        <position position="607"/>
    </location>
</feature>
<feature type="glycosylation site" description="N-linked (GlcNAc...) asparagine" evidence="4">
    <location>
        <position position="635"/>
    </location>
</feature>
<feature type="glycosylation site" description="O-linked (Man) threonine" evidence="2">
    <location>
        <position position="676"/>
    </location>
</feature>
<feature type="glycosylation site" description="O-linked (Man) threonine" evidence="2">
    <location>
        <position position="761"/>
    </location>
</feature>
<feature type="glycosylation site" description="N-linked (GlcNAc...) asparagine" evidence="4">
    <location>
        <position position="785"/>
    </location>
</feature>
<feature type="glycosylation site" description="N-linked (GlcNAc...) asparagine" evidence="4">
    <location>
        <position position="879"/>
    </location>
</feature>
<feature type="glycosylation site" description="N-linked (GlcNAc...) asparagine" evidence="4">
    <location>
        <position position="930"/>
    </location>
</feature>
<feature type="disulfide bond" evidence="6">
    <location>
        <begin position="95"/>
        <end position="101"/>
    </location>
</feature>
<feature type="disulfide bond" evidence="6">
    <location>
        <begin position="98"/>
        <end position="160"/>
    </location>
</feature>
<feature type="disulfide bond" evidence="6">
    <location>
        <begin position="133"/>
        <end position="141"/>
    </location>
</feature>
<feature type="disulfide bond" evidence="6">
    <location>
        <begin position="173"/>
        <end position="176"/>
    </location>
</feature>
<feature type="disulfide bond" evidence="6">
    <location>
        <begin position="299"/>
        <end position="364"/>
    </location>
</feature>
<feature type="disulfide bond" evidence="6">
    <location>
        <begin position="386"/>
        <end position="398"/>
    </location>
</feature>
<feature type="disulfide bond" evidence="6">
    <location>
        <begin position="520"/>
        <end position="538"/>
    </location>
</feature>
<feature type="disulfide bond" evidence="6">
    <location>
        <begin position="526"/>
        <end position="561"/>
    </location>
</feature>
<feature type="disulfide bond" evidence="6">
    <location>
        <begin position="529"/>
        <end position="545"/>
    </location>
</feature>
<feature type="disulfide bond" evidence="6">
    <location>
        <begin position="541"/>
        <end position="551"/>
    </location>
</feature>
<feature type="sequence conflict" description="In Ref. 1; AAZ94040." evidence="8" ref="1">
    <original>I</original>
    <variation>V</variation>
    <location>
        <position position="706"/>
    </location>
</feature>
<feature type="sequence conflict" description="In Ref. 1; AAZ94040." evidence="8" ref="1">
    <original>R</original>
    <variation>H</variation>
    <location>
        <position position="793"/>
    </location>
</feature>
<comment type="function">
    <text evidence="1">Receptor tyrosine kinase that transduces signals from the extracellular matrix into the cytoplasm by binding to hepatocyte growth factor/HGF ligand. Regulates many physiological processes including proliferation, scattering, morphogenesis and survival. Ligand binding at the cell surface induces autophosphorylation of MET on its intracellular domain that provides docking sites for downstream signaling molecules. Following activation by ligand, interacts with the PI3-kinase subunit PIK3R1, PLCG1, SRC, GRB2, STAT3 or the adapter GAB1. Recruitment of these downstream effectors by MET leads to the activation of several signaling cascades including the RAS-ERK, PI3 kinase-AKT, or PLCgamma-PKC. The RAS-ERK activation is associated with the morphogenetic effects while PI3K/AKT coordinates prosurvival effects. During embryonic development, MET signaling plays a role in gastrulation, development and migration of muscles and neuronal precursors, angiogenesis and kidney formation. In adults, participates in wound healing as well as organ regeneration and tissue remodeling. Also promotes differentiation and proliferation of hematopoietic cells (By similarity).</text>
</comment>
<comment type="catalytic activity">
    <reaction evidence="7">
        <text>L-tyrosyl-[protein] + ATP = O-phospho-L-tyrosyl-[protein] + ADP + H(+)</text>
        <dbReference type="Rhea" id="RHEA:10596"/>
        <dbReference type="Rhea" id="RHEA-COMP:10136"/>
        <dbReference type="Rhea" id="RHEA-COMP:20101"/>
        <dbReference type="ChEBI" id="CHEBI:15378"/>
        <dbReference type="ChEBI" id="CHEBI:30616"/>
        <dbReference type="ChEBI" id="CHEBI:46858"/>
        <dbReference type="ChEBI" id="CHEBI:61978"/>
        <dbReference type="ChEBI" id="CHEBI:456216"/>
        <dbReference type="EC" id="2.7.10.1"/>
    </reaction>
</comment>
<comment type="activity regulation">
    <text evidence="1">In its inactive state, the C-terminal tail interacts with the catalytic domain and inhibits the kinase activity. Upon ligand binding, the C-terminal tail is displaced and becomes phosphorylated, thus increasing the kinase activity (By similarity).</text>
</comment>
<comment type="subunit">
    <text evidence="2 3">Heterodimer made of an alpha chain (50 kDa) and a beta chain (145 kDa) which are disulfide linked. Binds PLXNB1. Interacts when phosphorylated with downstream effectors including STAT3, PIK3R1, SRC, PCLG1, GRB2 and GAB1. Interacts with SPSB1, SPSB2 and SPSB4. Interacts with INPP5D/SHIP1. When phosphorylated at Tyr-1356, interacts with INPPL1/SHIP2. Interacts with RANBP9 and RANBP10, as well as SPSB1, SPSB2, SPSB3 and SPSB4. SPSB1 binding occurs in the presence and in the absence of HGF, however HGF treatment has a positive effect on this interaction. Interacts with MUC20; prevents interaction with GRB2 and suppresses hepatocyte growth factor-induced cell proliferation. Interacts with GRB10. Interacts with PTPN1 and PTPN2. Interacts with HSP90AA1 and HSP90AB1; the interaction suppresses MET kinase activity. Interacts with tensin TNS3 (By similarity). Interacts (when phosphorylated) with tensin TNS4 (via SH2 domain); the interaction increases MET protein stability by inhibiting MET endocytosis and subsequent lysosomal degradation (By similarity).</text>
</comment>
<comment type="subcellular location">
    <subcellularLocation>
        <location evidence="1">Membrane</location>
        <topology evidence="1">Single-pass type I membrane protein</topology>
    </subcellularLocation>
</comment>
<comment type="domain">
    <text evidence="1">The kinase domain is involved in SPSB1 binding.</text>
</comment>
<comment type="domain">
    <text evidence="1">The beta-propeller Sema domain mediates binding to HGF.</text>
</comment>
<comment type="PTM">
    <text evidence="2">Autophosphorylated in response to ligand binding on Tyr-1234 and Tyr-1235 in the kinase domain leading to further phosphorylation of Tyr-1349 and Tyr-1356 in the C-terminal multifunctional docking site. Dephosphorylated by PTPRJ at Tyr-1349 and Tyr-1365. Dephosphorylated by PTPN1 and PTPN2 (By similarity).</text>
</comment>
<comment type="PTM">
    <text evidence="2">Ubiquitinated. Ubiquitination by CBL regulates the receptor stability and activity through proteasomal degradation (By similarity).</text>
</comment>
<comment type="PTM">
    <text evidence="2">O-mannosylation of IPT/TIG domains by TMEM260 is required for protein maturation. O-mannosylated residues are composed of single mannose glycans that are not elongated or modified.</text>
</comment>
<comment type="similarity">
    <text evidence="5">Belongs to the protein kinase superfamily. Tyr protein kinase family.</text>
</comment>
<accession>Q2QLE0</accession>
<accession>Q2VHX7</accession>
<gene>
    <name type="primary">MET</name>
</gene>
<protein>
    <recommendedName>
        <fullName>Hepatocyte growth factor receptor</fullName>
        <shortName>HGF receptor</shortName>
        <ecNumber>2.7.10.1</ecNumber>
    </recommendedName>
    <alternativeName>
        <fullName>HGF/SF receptor</fullName>
    </alternativeName>
    <alternativeName>
        <fullName>Proto-oncogene c-Met</fullName>
    </alternativeName>
    <alternativeName>
        <fullName>Scatter factor receptor</fullName>
        <shortName>SF receptor</shortName>
    </alternativeName>
    <alternativeName>
        <fullName>Tyrosine-protein kinase Met</fullName>
    </alternativeName>
</protein>
<name>MET_PIG</name>
<dbReference type="EC" id="2.7.10.1"/>
<dbReference type="EMBL" id="DQ141604">
    <property type="protein sequence ID" value="AAZ94040.1"/>
    <property type="molecule type" value="mRNA"/>
</dbReference>
<dbReference type="EMBL" id="DP000017">
    <property type="protein sequence ID" value="AAR16301.1"/>
    <property type="molecule type" value="Genomic_DNA"/>
</dbReference>
<dbReference type="RefSeq" id="NP_001033097.1">
    <property type="nucleotide sequence ID" value="NM_001038008.1"/>
</dbReference>
<dbReference type="RefSeq" id="XP_020934191.1">
    <property type="nucleotide sequence ID" value="XM_021078532.1"/>
</dbReference>
<dbReference type="SMR" id="Q2QLE0"/>
<dbReference type="FunCoup" id="Q2QLE0">
    <property type="interactions" value="333"/>
</dbReference>
<dbReference type="STRING" id="9823.ENSSSCP00000017620"/>
<dbReference type="GlyCosmos" id="Q2QLE0">
    <property type="glycosylation" value="11 sites, No reported glycans"/>
</dbReference>
<dbReference type="GlyGen" id="Q2QLE0">
    <property type="glycosylation" value="14 sites"/>
</dbReference>
<dbReference type="PaxDb" id="9823-ENSSSCP00000017620"/>
<dbReference type="PeptideAtlas" id="Q2QLE0"/>
<dbReference type="Ensembl" id="ENSSSCT00000018110.4">
    <property type="protein sequence ID" value="ENSSSCP00000017620.3"/>
    <property type="gene ID" value="ENSSSCG00000024351.4"/>
</dbReference>
<dbReference type="Ensembl" id="ENSSSCT00025097978.1">
    <property type="protein sequence ID" value="ENSSSCP00025043066.1"/>
    <property type="gene ID" value="ENSSSCG00025071107.1"/>
</dbReference>
<dbReference type="Ensembl" id="ENSSSCT00030074545.1">
    <property type="protein sequence ID" value="ENSSSCP00030034102.1"/>
    <property type="gene ID" value="ENSSSCG00030053322.1"/>
</dbReference>
<dbReference type="Ensembl" id="ENSSSCT00035044601.1">
    <property type="protein sequence ID" value="ENSSSCP00035017842.1"/>
    <property type="gene ID" value="ENSSSCG00035033646.1"/>
</dbReference>
<dbReference type="Ensembl" id="ENSSSCT00040048172.1">
    <property type="protein sequence ID" value="ENSSSCP00040020119.1"/>
    <property type="gene ID" value="ENSSSCG00040035636.1"/>
</dbReference>
<dbReference type="Ensembl" id="ENSSSCT00055038480.1">
    <property type="protein sequence ID" value="ENSSSCP00055030572.1"/>
    <property type="gene ID" value="ENSSSCG00055019459.1"/>
</dbReference>
<dbReference type="Ensembl" id="ENSSSCT00070057594.1">
    <property type="protein sequence ID" value="ENSSSCP00070048966.1"/>
    <property type="gene ID" value="ENSSSCG00070028695.1"/>
</dbReference>
<dbReference type="Ensembl" id="ENSSSCT00085001886">
    <property type="protein sequence ID" value="ENSSSCP00085001409"/>
    <property type="gene ID" value="ENSSSCG00085001286"/>
</dbReference>
<dbReference type="Ensembl" id="ENSSSCT00105012777">
    <property type="protein sequence ID" value="ENSSSCP00105009472"/>
    <property type="gene ID" value="ENSSSCG00105006243"/>
</dbReference>
<dbReference type="Ensembl" id="ENSSSCT00110069192">
    <property type="protein sequence ID" value="ENSSSCP00110048744"/>
    <property type="gene ID" value="ENSSSCG00110036360"/>
</dbReference>
<dbReference type="Ensembl" id="ENSSSCT00115022020">
    <property type="protein sequence ID" value="ENSSSCP00115020853"/>
    <property type="gene ID" value="ENSSSCG00115012495"/>
</dbReference>
<dbReference type="Ensembl" id="ENSSSCT00130000285">
    <property type="protein sequence ID" value="ENSSSCP00130000138"/>
    <property type="gene ID" value="ENSSSCG00130000215"/>
</dbReference>
<dbReference type="GeneID" id="654328"/>
<dbReference type="KEGG" id="ssc:654328"/>
<dbReference type="CTD" id="4233"/>
<dbReference type="VGNC" id="VGNC:109462">
    <property type="gene designation" value="MET"/>
</dbReference>
<dbReference type="eggNOG" id="KOG3610">
    <property type="taxonomic scope" value="Eukaryota"/>
</dbReference>
<dbReference type="GeneTree" id="ENSGT00940000158022"/>
<dbReference type="InParanoid" id="Q2QLE0"/>
<dbReference type="OMA" id="DEEPGQC"/>
<dbReference type="OrthoDB" id="9985181at2759"/>
<dbReference type="Reactome" id="R-SSC-1257604">
    <property type="pathway name" value="PIP3 activates AKT signaling"/>
</dbReference>
<dbReference type="Reactome" id="R-SSC-416550">
    <property type="pathway name" value="Sema4D mediated inhibition of cell attachment and migration"/>
</dbReference>
<dbReference type="Reactome" id="R-SSC-5673001">
    <property type="pathway name" value="RAF/MAP kinase cascade"/>
</dbReference>
<dbReference type="Reactome" id="R-SSC-6806942">
    <property type="pathway name" value="MET Receptor Activation"/>
</dbReference>
<dbReference type="Reactome" id="R-SSC-6807004">
    <property type="pathway name" value="Negative regulation of MET activity"/>
</dbReference>
<dbReference type="Reactome" id="R-SSC-6811558">
    <property type="pathway name" value="PI5P, PP2A and IER3 Regulate PI3K/AKT Signaling"/>
</dbReference>
<dbReference type="Reactome" id="R-SSC-8851805">
    <property type="pathway name" value="MET activates RAS signaling"/>
</dbReference>
<dbReference type="Reactome" id="R-SSC-8851907">
    <property type="pathway name" value="MET activates PI3K/AKT signaling"/>
</dbReference>
<dbReference type="Reactome" id="R-SSC-8865999">
    <property type="pathway name" value="MET activates PTPN11"/>
</dbReference>
<dbReference type="Reactome" id="R-SSC-8874081">
    <property type="pathway name" value="MET activates PTK2 signaling"/>
</dbReference>
<dbReference type="Reactome" id="R-SSC-8875513">
    <property type="pathway name" value="MET interacts with TNS proteins"/>
</dbReference>
<dbReference type="Reactome" id="R-SSC-8875555">
    <property type="pathway name" value="MET activates RAP1 and RAC1"/>
</dbReference>
<dbReference type="Reactome" id="R-SSC-8875656">
    <property type="pathway name" value="MET receptor recycling"/>
</dbReference>
<dbReference type="Reactome" id="R-SSC-8875791">
    <property type="pathway name" value="MET activates STAT3"/>
</dbReference>
<dbReference type="Reactome" id="R-SSC-9734091">
    <property type="pathway name" value="Drug-mediated inhibition of MET activation"/>
</dbReference>
<dbReference type="Proteomes" id="UP000008227">
    <property type="component" value="Chromosome 18"/>
</dbReference>
<dbReference type="Proteomes" id="UP000314985">
    <property type="component" value="Chromosome 18"/>
</dbReference>
<dbReference type="Proteomes" id="UP000694570">
    <property type="component" value="Unplaced"/>
</dbReference>
<dbReference type="Proteomes" id="UP000694571">
    <property type="component" value="Unplaced"/>
</dbReference>
<dbReference type="Proteomes" id="UP000694720">
    <property type="component" value="Unplaced"/>
</dbReference>
<dbReference type="Proteomes" id="UP000694722">
    <property type="component" value="Unplaced"/>
</dbReference>
<dbReference type="Proteomes" id="UP000694723">
    <property type="component" value="Unplaced"/>
</dbReference>
<dbReference type="Proteomes" id="UP000694724">
    <property type="component" value="Unplaced"/>
</dbReference>
<dbReference type="Proteomes" id="UP000694725">
    <property type="component" value="Unplaced"/>
</dbReference>
<dbReference type="Proteomes" id="UP000694726">
    <property type="component" value="Unplaced"/>
</dbReference>
<dbReference type="Proteomes" id="UP000694727">
    <property type="component" value="Unplaced"/>
</dbReference>
<dbReference type="Proteomes" id="UP000694728">
    <property type="component" value="Unplaced"/>
</dbReference>
<dbReference type="Bgee" id="ENSSSCG00000024351">
    <property type="expression patterns" value="Expressed in penis and 40 other cell types or tissues"/>
</dbReference>
<dbReference type="ExpressionAtlas" id="Q2QLE0">
    <property type="expression patterns" value="baseline and differential"/>
</dbReference>
<dbReference type="GO" id="GO:0009925">
    <property type="term" value="C:basal plasma membrane"/>
    <property type="evidence" value="ECO:0000318"/>
    <property type="project" value="GO_Central"/>
</dbReference>
<dbReference type="GO" id="GO:0005886">
    <property type="term" value="C:plasma membrane"/>
    <property type="evidence" value="ECO:0000318"/>
    <property type="project" value="GO_Central"/>
</dbReference>
<dbReference type="GO" id="GO:0043235">
    <property type="term" value="C:receptor complex"/>
    <property type="evidence" value="ECO:0000318"/>
    <property type="project" value="GO_Central"/>
</dbReference>
<dbReference type="GO" id="GO:0005524">
    <property type="term" value="F:ATP binding"/>
    <property type="evidence" value="ECO:0007669"/>
    <property type="project" value="UniProtKB-KW"/>
</dbReference>
<dbReference type="GO" id="GO:0005008">
    <property type="term" value="F:hepatocyte growth factor receptor activity"/>
    <property type="evidence" value="ECO:0000318"/>
    <property type="project" value="GO_Central"/>
</dbReference>
<dbReference type="GO" id="GO:0042802">
    <property type="term" value="F:identical protein binding"/>
    <property type="evidence" value="ECO:0007669"/>
    <property type="project" value="Ensembl"/>
</dbReference>
<dbReference type="GO" id="GO:0019903">
    <property type="term" value="F:protein phosphatase binding"/>
    <property type="evidence" value="ECO:0007669"/>
    <property type="project" value="Ensembl"/>
</dbReference>
<dbReference type="GO" id="GO:0017154">
    <property type="term" value="F:semaphorin receptor activity"/>
    <property type="evidence" value="ECO:0007669"/>
    <property type="project" value="InterPro"/>
</dbReference>
<dbReference type="GO" id="GO:0048754">
    <property type="term" value="P:branching morphogenesis of an epithelial tube"/>
    <property type="evidence" value="ECO:0007669"/>
    <property type="project" value="Ensembl"/>
</dbReference>
<dbReference type="GO" id="GO:0007169">
    <property type="term" value="P:cell surface receptor protein tyrosine kinase signaling pathway"/>
    <property type="evidence" value="ECO:0000318"/>
    <property type="project" value="GO_Central"/>
</dbReference>
<dbReference type="GO" id="GO:0001886">
    <property type="term" value="P:endothelial cell morphogenesis"/>
    <property type="evidence" value="ECO:0007669"/>
    <property type="project" value="Ensembl"/>
</dbReference>
<dbReference type="GO" id="GO:0061436">
    <property type="term" value="P:establishment of skin barrier"/>
    <property type="evidence" value="ECO:0007669"/>
    <property type="project" value="Ensembl"/>
</dbReference>
<dbReference type="GO" id="GO:0001889">
    <property type="term" value="P:liver development"/>
    <property type="evidence" value="ECO:0000318"/>
    <property type="project" value="GO_Central"/>
</dbReference>
<dbReference type="GO" id="GO:1901299">
    <property type="term" value="P:negative regulation of hydrogen peroxide-mediated programmed cell death"/>
    <property type="evidence" value="ECO:0007669"/>
    <property type="project" value="Ensembl"/>
</dbReference>
<dbReference type="GO" id="GO:0035024">
    <property type="term" value="P:negative regulation of Rho protein signal transduction"/>
    <property type="evidence" value="ECO:0007669"/>
    <property type="project" value="Ensembl"/>
</dbReference>
<dbReference type="GO" id="GO:0051497">
    <property type="term" value="P:negative regulation of stress fiber assembly"/>
    <property type="evidence" value="ECO:0007669"/>
    <property type="project" value="Ensembl"/>
</dbReference>
<dbReference type="GO" id="GO:0070495">
    <property type="term" value="P:negative regulation of thrombin-activated receptor signaling pathway"/>
    <property type="evidence" value="ECO:0007669"/>
    <property type="project" value="Ensembl"/>
</dbReference>
<dbReference type="GO" id="GO:0030182">
    <property type="term" value="P:neuron differentiation"/>
    <property type="evidence" value="ECO:0000318"/>
    <property type="project" value="GO_Central"/>
</dbReference>
<dbReference type="GO" id="GO:0031016">
    <property type="term" value="P:pancreas development"/>
    <property type="evidence" value="ECO:0000318"/>
    <property type="project" value="GO_Central"/>
</dbReference>
<dbReference type="GO" id="GO:0050918">
    <property type="term" value="P:positive chemotaxis"/>
    <property type="evidence" value="ECO:0000250"/>
    <property type="project" value="UniProtKB"/>
</dbReference>
<dbReference type="GO" id="GO:2001028">
    <property type="term" value="P:positive regulation of endothelial cell chemotaxis"/>
    <property type="evidence" value="ECO:0000250"/>
    <property type="project" value="UniProtKB"/>
</dbReference>
<dbReference type="GO" id="GO:0031116">
    <property type="term" value="P:positive regulation of microtubule polymerization"/>
    <property type="evidence" value="ECO:0007669"/>
    <property type="project" value="Ensembl"/>
</dbReference>
<dbReference type="GO" id="GO:0045944">
    <property type="term" value="P:positive regulation of transcription by RNA polymerase II"/>
    <property type="evidence" value="ECO:0007669"/>
    <property type="project" value="Ensembl"/>
</dbReference>
<dbReference type="GO" id="GO:0071526">
    <property type="term" value="P:semaphorin-plexin signaling pathway"/>
    <property type="evidence" value="ECO:0000250"/>
    <property type="project" value="UniProtKB"/>
</dbReference>
<dbReference type="CDD" id="cd00603">
    <property type="entry name" value="IPT_PCSR"/>
    <property type="match status" value="1"/>
</dbReference>
<dbReference type="CDD" id="cd01180">
    <property type="entry name" value="IPT_plexin_repeat1"/>
    <property type="match status" value="1"/>
</dbReference>
<dbReference type="CDD" id="cd05058">
    <property type="entry name" value="PTKc_Met_Ron"/>
    <property type="match status" value="1"/>
</dbReference>
<dbReference type="FunFam" id="1.10.510.10:FF:000093">
    <property type="entry name" value="Hepatocyte growth factor receptor"/>
    <property type="match status" value="1"/>
</dbReference>
<dbReference type="FunFam" id="2.130.10.10:FF:000088">
    <property type="entry name" value="Hepatocyte growth factor receptor"/>
    <property type="match status" value="1"/>
</dbReference>
<dbReference type="FunFam" id="2.60.40.10:FF:000213">
    <property type="entry name" value="Hepatocyte growth factor receptor"/>
    <property type="match status" value="1"/>
</dbReference>
<dbReference type="FunFam" id="2.60.40.10:FF:000400">
    <property type="entry name" value="Hepatocyte growth factor receptor"/>
    <property type="match status" value="1"/>
</dbReference>
<dbReference type="FunFam" id="2.60.40.10:FF:002708">
    <property type="entry name" value="Hepatocyte growth factor receptor"/>
    <property type="match status" value="1"/>
</dbReference>
<dbReference type="FunFam" id="3.30.200.20:FF:000188">
    <property type="entry name" value="Hepatocyte growth factor receptor"/>
    <property type="match status" value="1"/>
</dbReference>
<dbReference type="Gene3D" id="2.60.40.10">
    <property type="entry name" value="Immunoglobulins"/>
    <property type="match status" value="3"/>
</dbReference>
<dbReference type="Gene3D" id="3.30.200.20">
    <property type="entry name" value="Phosphorylase Kinase, domain 1"/>
    <property type="match status" value="1"/>
</dbReference>
<dbReference type="Gene3D" id="1.10.510.10">
    <property type="entry name" value="Transferase(Phosphotransferase) domain 1"/>
    <property type="match status" value="1"/>
</dbReference>
<dbReference type="Gene3D" id="2.130.10.10">
    <property type="entry name" value="YVTN repeat-like/Quinoprotein amine dehydrogenase"/>
    <property type="match status" value="1"/>
</dbReference>
<dbReference type="InterPro" id="IPR013783">
    <property type="entry name" value="Ig-like_fold"/>
</dbReference>
<dbReference type="InterPro" id="IPR014756">
    <property type="entry name" value="Ig_E-set"/>
</dbReference>
<dbReference type="InterPro" id="IPR002909">
    <property type="entry name" value="IPT_dom"/>
</dbReference>
<dbReference type="InterPro" id="IPR011009">
    <property type="entry name" value="Kinase-like_dom_sf"/>
</dbReference>
<dbReference type="InterPro" id="IPR031148">
    <property type="entry name" value="Plexin"/>
</dbReference>
<dbReference type="InterPro" id="IPR002165">
    <property type="entry name" value="Plexin_repeat"/>
</dbReference>
<dbReference type="InterPro" id="IPR000719">
    <property type="entry name" value="Prot_kinase_dom"/>
</dbReference>
<dbReference type="InterPro" id="IPR017441">
    <property type="entry name" value="Protein_kinase_ATP_BS"/>
</dbReference>
<dbReference type="InterPro" id="IPR016201">
    <property type="entry name" value="PSI"/>
</dbReference>
<dbReference type="InterPro" id="IPR001627">
    <property type="entry name" value="Semap_dom"/>
</dbReference>
<dbReference type="InterPro" id="IPR036352">
    <property type="entry name" value="Semap_dom_sf"/>
</dbReference>
<dbReference type="InterPro" id="IPR001245">
    <property type="entry name" value="Ser-Thr/Tyr_kinase_cat_dom"/>
</dbReference>
<dbReference type="InterPro" id="IPR008266">
    <property type="entry name" value="Tyr_kinase_AS"/>
</dbReference>
<dbReference type="InterPro" id="IPR020635">
    <property type="entry name" value="Tyr_kinase_cat_dom"/>
</dbReference>
<dbReference type="InterPro" id="IPR016244">
    <property type="entry name" value="Tyr_kinase_HGF/MSP_rcpt"/>
</dbReference>
<dbReference type="InterPro" id="IPR015943">
    <property type="entry name" value="WD40/YVTN_repeat-like_dom_sf"/>
</dbReference>
<dbReference type="PANTHER" id="PTHR22625:SF61">
    <property type="entry name" value="HEPATOCYTE GROWTH FACTOR RECEPTOR"/>
    <property type="match status" value="1"/>
</dbReference>
<dbReference type="PANTHER" id="PTHR22625">
    <property type="entry name" value="PLEXIN"/>
    <property type="match status" value="1"/>
</dbReference>
<dbReference type="Pfam" id="PF07714">
    <property type="entry name" value="PK_Tyr_Ser-Thr"/>
    <property type="match status" value="1"/>
</dbReference>
<dbReference type="Pfam" id="PF01437">
    <property type="entry name" value="PSI"/>
    <property type="match status" value="1"/>
</dbReference>
<dbReference type="Pfam" id="PF01403">
    <property type="entry name" value="Sema"/>
    <property type="match status" value="1"/>
</dbReference>
<dbReference type="Pfam" id="PF01833">
    <property type="entry name" value="TIG"/>
    <property type="match status" value="3"/>
</dbReference>
<dbReference type="PIRSF" id="PIRSF000617">
    <property type="entry name" value="TyrPK_HGF-R"/>
    <property type="match status" value="1"/>
</dbReference>
<dbReference type="PRINTS" id="PR00109">
    <property type="entry name" value="TYRKINASE"/>
</dbReference>
<dbReference type="SMART" id="SM00429">
    <property type="entry name" value="IPT"/>
    <property type="match status" value="4"/>
</dbReference>
<dbReference type="SMART" id="SM00423">
    <property type="entry name" value="PSI"/>
    <property type="match status" value="1"/>
</dbReference>
<dbReference type="SMART" id="SM00630">
    <property type="entry name" value="Sema"/>
    <property type="match status" value="1"/>
</dbReference>
<dbReference type="SMART" id="SM00219">
    <property type="entry name" value="TyrKc"/>
    <property type="match status" value="1"/>
</dbReference>
<dbReference type="SUPFAM" id="SSF81296">
    <property type="entry name" value="E set domains"/>
    <property type="match status" value="3"/>
</dbReference>
<dbReference type="SUPFAM" id="SSF103575">
    <property type="entry name" value="Plexin repeat"/>
    <property type="match status" value="1"/>
</dbReference>
<dbReference type="SUPFAM" id="SSF56112">
    <property type="entry name" value="Protein kinase-like (PK-like)"/>
    <property type="match status" value="1"/>
</dbReference>
<dbReference type="SUPFAM" id="SSF101912">
    <property type="entry name" value="Sema domain"/>
    <property type="match status" value="1"/>
</dbReference>
<dbReference type="PROSITE" id="PS00107">
    <property type="entry name" value="PROTEIN_KINASE_ATP"/>
    <property type="match status" value="1"/>
</dbReference>
<dbReference type="PROSITE" id="PS50011">
    <property type="entry name" value="PROTEIN_KINASE_DOM"/>
    <property type="match status" value="1"/>
</dbReference>
<dbReference type="PROSITE" id="PS00109">
    <property type="entry name" value="PROTEIN_KINASE_TYR"/>
    <property type="match status" value="1"/>
</dbReference>
<dbReference type="PROSITE" id="PS51004">
    <property type="entry name" value="SEMA"/>
    <property type="match status" value="1"/>
</dbReference>
<evidence type="ECO:0000250" key="1"/>
<evidence type="ECO:0000250" key="2">
    <source>
        <dbReference type="UniProtKB" id="P08581"/>
    </source>
</evidence>
<evidence type="ECO:0000250" key="3">
    <source>
        <dbReference type="UniProtKB" id="P16056"/>
    </source>
</evidence>
<evidence type="ECO:0000255" key="4"/>
<evidence type="ECO:0000255" key="5">
    <source>
        <dbReference type="PROSITE-ProRule" id="PRU00159"/>
    </source>
</evidence>
<evidence type="ECO:0000255" key="6">
    <source>
        <dbReference type="PROSITE-ProRule" id="PRU00352"/>
    </source>
</evidence>
<evidence type="ECO:0000255" key="7">
    <source>
        <dbReference type="PROSITE-ProRule" id="PRU10028"/>
    </source>
</evidence>
<evidence type="ECO:0000305" key="8"/>
<proteinExistence type="evidence at transcript level"/>